<proteinExistence type="inferred from homology"/>
<comment type="function">
    <text evidence="1">Nucleotidase that shows phosphatase activity on nucleoside 5'-monophosphates.</text>
</comment>
<comment type="catalytic activity">
    <reaction evidence="1">
        <text>a ribonucleoside 5'-phosphate + H2O = a ribonucleoside + phosphate</text>
        <dbReference type="Rhea" id="RHEA:12484"/>
        <dbReference type="ChEBI" id="CHEBI:15377"/>
        <dbReference type="ChEBI" id="CHEBI:18254"/>
        <dbReference type="ChEBI" id="CHEBI:43474"/>
        <dbReference type="ChEBI" id="CHEBI:58043"/>
        <dbReference type="EC" id="3.1.3.5"/>
    </reaction>
</comment>
<comment type="cofactor">
    <cofactor evidence="1">
        <name>a divalent metal cation</name>
        <dbReference type="ChEBI" id="CHEBI:60240"/>
    </cofactor>
    <text evidence="1">Binds 1 divalent metal cation per subunit.</text>
</comment>
<comment type="subcellular location">
    <subcellularLocation>
        <location evidence="1">Cytoplasm</location>
    </subcellularLocation>
</comment>
<comment type="similarity">
    <text evidence="1">Belongs to the SurE nucleotidase family.</text>
</comment>
<dbReference type="EC" id="3.1.3.5" evidence="1"/>
<dbReference type="EMBL" id="AE015925">
    <property type="protein sequence ID" value="AAP05263.1"/>
    <property type="molecule type" value="Genomic_DNA"/>
</dbReference>
<dbReference type="RefSeq" id="WP_011006479.1">
    <property type="nucleotide sequence ID" value="NC_003361.3"/>
</dbReference>
<dbReference type="SMR" id="Q823A6"/>
<dbReference type="STRING" id="227941.CCA_00520"/>
<dbReference type="KEGG" id="cca:CCA_00520"/>
<dbReference type="eggNOG" id="COG0496">
    <property type="taxonomic scope" value="Bacteria"/>
</dbReference>
<dbReference type="HOGENOM" id="CLU_045192_1_0_0"/>
<dbReference type="OrthoDB" id="9780815at2"/>
<dbReference type="Proteomes" id="UP000002193">
    <property type="component" value="Chromosome"/>
</dbReference>
<dbReference type="GO" id="GO:0005737">
    <property type="term" value="C:cytoplasm"/>
    <property type="evidence" value="ECO:0007669"/>
    <property type="project" value="UniProtKB-SubCell"/>
</dbReference>
<dbReference type="GO" id="GO:0008254">
    <property type="term" value="F:3'-nucleotidase activity"/>
    <property type="evidence" value="ECO:0007669"/>
    <property type="project" value="TreeGrafter"/>
</dbReference>
<dbReference type="GO" id="GO:0008253">
    <property type="term" value="F:5'-nucleotidase activity"/>
    <property type="evidence" value="ECO:0007669"/>
    <property type="project" value="UniProtKB-UniRule"/>
</dbReference>
<dbReference type="GO" id="GO:0004309">
    <property type="term" value="F:exopolyphosphatase activity"/>
    <property type="evidence" value="ECO:0007669"/>
    <property type="project" value="TreeGrafter"/>
</dbReference>
<dbReference type="GO" id="GO:0046872">
    <property type="term" value="F:metal ion binding"/>
    <property type="evidence" value="ECO:0007669"/>
    <property type="project" value="UniProtKB-UniRule"/>
</dbReference>
<dbReference type="GO" id="GO:0000166">
    <property type="term" value="F:nucleotide binding"/>
    <property type="evidence" value="ECO:0007669"/>
    <property type="project" value="UniProtKB-KW"/>
</dbReference>
<dbReference type="Gene3D" id="3.40.1210.10">
    <property type="entry name" value="Survival protein SurE-like phosphatase/nucleotidase"/>
    <property type="match status" value="1"/>
</dbReference>
<dbReference type="HAMAP" id="MF_00060">
    <property type="entry name" value="SurE"/>
    <property type="match status" value="1"/>
</dbReference>
<dbReference type="InterPro" id="IPR030048">
    <property type="entry name" value="SurE"/>
</dbReference>
<dbReference type="InterPro" id="IPR002828">
    <property type="entry name" value="SurE-like_Pase/nucleotidase"/>
</dbReference>
<dbReference type="InterPro" id="IPR036523">
    <property type="entry name" value="SurE-like_sf"/>
</dbReference>
<dbReference type="NCBIfam" id="NF001493">
    <property type="entry name" value="PRK00346.2-3"/>
    <property type="match status" value="1"/>
</dbReference>
<dbReference type="NCBIfam" id="TIGR00087">
    <property type="entry name" value="surE"/>
    <property type="match status" value="1"/>
</dbReference>
<dbReference type="PANTHER" id="PTHR30457">
    <property type="entry name" value="5'-NUCLEOTIDASE SURE"/>
    <property type="match status" value="1"/>
</dbReference>
<dbReference type="PANTHER" id="PTHR30457:SF12">
    <property type="entry name" value="5'_3'-NUCLEOTIDASE SURE"/>
    <property type="match status" value="1"/>
</dbReference>
<dbReference type="Pfam" id="PF01975">
    <property type="entry name" value="SurE"/>
    <property type="match status" value="1"/>
</dbReference>
<dbReference type="SUPFAM" id="SSF64167">
    <property type="entry name" value="SurE-like"/>
    <property type="match status" value="1"/>
</dbReference>
<sequence>MSKRLKILLTNDDGISAKGMSLLVSNLLKADFADLYVVAPSTEQSGKSMSFSYTQPVSIESVDYPQEVAGAWAVSGSPVDCVKLALGDLFYDSFPDLVLSGINHGSNAGRNIFYSGTAGAAMEAILSGVPSIAFSQEQHISFFQTDSAPELLRKLSFYALSNPFPVVTGFNVNFPASERNEPWKGMRLVATGKEFACGLPKLLSSDGKRKSFSLSDCQVVMDEDISEECRCLLDNYITVVPLLVRNSPLALTSESEFQQLQETFQEFMCSEADTRLFDV</sequence>
<keyword id="KW-0963">Cytoplasm</keyword>
<keyword id="KW-0378">Hydrolase</keyword>
<keyword id="KW-0479">Metal-binding</keyword>
<keyword id="KW-0547">Nucleotide-binding</keyword>
<name>SURE1_CHLCV</name>
<feature type="chain" id="PRO_0000111799" description="5'-nucleotidase SurE 1">
    <location>
        <begin position="1"/>
        <end position="279"/>
    </location>
</feature>
<feature type="binding site" evidence="1">
    <location>
        <position position="12"/>
    </location>
    <ligand>
        <name>a divalent metal cation</name>
        <dbReference type="ChEBI" id="CHEBI:60240"/>
    </ligand>
</feature>
<feature type="binding site" evidence="1">
    <location>
        <position position="13"/>
    </location>
    <ligand>
        <name>a divalent metal cation</name>
        <dbReference type="ChEBI" id="CHEBI:60240"/>
    </ligand>
</feature>
<feature type="binding site" evidence="1">
    <location>
        <position position="45"/>
    </location>
    <ligand>
        <name>a divalent metal cation</name>
        <dbReference type="ChEBI" id="CHEBI:60240"/>
    </ligand>
</feature>
<feature type="binding site" evidence="1">
    <location>
        <position position="103"/>
    </location>
    <ligand>
        <name>a divalent metal cation</name>
        <dbReference type="ChEBI" id="CHEBI:60240"/>
    </ligand>
</feature>
<evidence type="ECO:0000255" key="1">
    <source>
        <dbReference type="HAMAP-Rule" id="MF_00060"/>
    </source>
</evidence>
<organism>
    <name type="scientific">Chlamydia caviae (strain ATCC VR-813 / DSM 19441 / 03DC25 / GPIC)</name>
    <name type="common">Chlamydophila caviae</name>
    <dbReference type="NCBI Taxonomy" id="227941"/>
    <lineage>
        <taxon>Bacteria</taxon>
        <taxon>Pseudomonadati</taxon>
        <taxon>Chlamydiota</taxon>
        <taxon>Chlamydiia</taxon>
        <taxon>Chlamydiales</taxon>
        <taxon>Chlamydiaceae</taxon>
        <taxon>Chlamydia/Chlamydophila group</taxon>
        <taxon>Chlamydia</taxon>
    </lineage>
</organism>
<gene>
    <name evidence="1" type="primary">surE1</name>
    <name type="ordered locus">CCA_00520</name>
</gene>
<reference key="1">
    <citation type="journal article" date="2003" name="Nucleic Acids Res.">
        <title>Genome sequence of Chlamydophila caviae (Chlamydia psittaci GPIC): examining the role of niche-specific genes in the evolution of the Chlamydiaceae.</title>
        <authorList>
            <person name="Read T.D."/>
            <person name="Myers G.S.A."/>
            <person name="Brunham R.C."/>
            <person name="Nelson W.C."/>
            <person name="Paulsen I.T."/>
            <person name="Heidelberg J.F."/>
            <person name="Holtzapple E.K."/>
            <person name="Khouri H.M."/>
            <person name="Federova N.B."/>
            <person name="Carty H.A."/>
            <person name="Umayam L.A."/>
            <person name="Haft D.H."/>
            <person name="Peterson J.D."/>
            <person name="Beanan M.J."/>
            <person name="White O."/>
            <person name="Salzberg S.L."/>
            <person name="Hsia R.-C."/>
            <person name="McClarty G."/>
            <person name="Rank R.G."/>
            <person name="Bavoil P.M."/>
            <person name="Fraser C.M."/>
        </authorList>
    </citation>
    <scope>NUCLEOTIDE SEQUENCE [LARGE SCALE GENOMIC DNA]</scope>
    <source>
        <strain>ATCC VR-813 / DSM 19441 / 03DC25 / GPIC</strain>
    </source>
</reference>
<accession>Q823A6</accession>
<protein>
    <recommendedName>
        <fullName evidence="1">5'-nucleotidase SurE 1</fullName>
        <ecNumber evidence="1">3.1.3.5</ecNumber>
    </recommendedName>
    <alternativeName>
        <fullName evidence="1">Nucleoside 5'-monophosphate phosphohydrolase 1</fullName>
    </alternativeName>
</protein>